<feature type="chain" id="PRO_0000175820" description="Probable transcriptional regulatory protein HP_0162">
    <location>
        <begin position="1"/>
        <end position="240"/>
    </location>
</feature>
<feature type="helix" evidence="2">
    <location>
        <begin position="23"/>
        <end position="35"/>
    </location>
</feature>
<feature type="helix" evidence="2">
    <location>
        <begin position="41"/>
        <end position="43"/>
    </location>
</feature>
<feature type="helix" evidence="2">
    <location>
        <begin position="45"/>
        <end position="57"/>
    </location>
</feature>
<feature type="helix" evidence="2">
    <location>
        <begin position="61"/>
        <end position="70"/>
    </location>
</feature>
<feature type="strand" evidence="2">
    <location>
        <begin position="79"/>
        <end position="87"/>
    </location>
</feature>
<feature type="turn" evidence="2">
    <location>
        <begin position="88"/>
        <end position="90"/>
    </location>
</feature>
<feature type="strand" evidence="2">
    <location>
        <begin position="91"/>
        <end position="100"/>
    </location>
</feature>
<feature type="helix" evidence="2">
    <location>
        <begin position="102"/>
        <end position="113"/>
    </location>
</feature>
<feature type="strand" evidence="2">
    <location>
        <begin position="120"/>
        <end position="122"/>
    </location>
</feature>
<feature type="turn" evidence="2">
    <location>
        <begin position="124"/>
        <end position="129"/>
    </location>
</feature>
<feature type="strand" evidence="2">
    <location>
        <begin position="130"/>
        <end position="140"/>
    </location>
</feature>
<feature type="helix" evidence="2">
    <location>
        <begin position="141"/>
        <end position="146"/>
    </location>
</feature>
<feature type="helix" evidence="2">
    <location>
        <begin position="151"/>
        <end position="158"/>
    </location>
</feature>
<feature type="helix" evidence="2">
    <location>
        <begin position="159"/>
        <end position="161"/>
    </location>
</feature>
<feature type="strand" evidence="2">
    <location>
        <begin position="163"/>
        <end position="169"/>
    </location>
</feature>
<feature type="strand" evidence="2">
    <location>
        <begin position="172"/>
        <end position="178"/>
    </location>
</feature>
<feature type="helix" evidence="2">
    <location>
        <begin position="179"/>
        <end position="181"/>
    </location>
</feature>
<feature type="helix" evidence="2">
    <location>
        <begin position="182"/>
        <end position="191"/>
    </location>
</feature>
<feature type="strand" evidence="2">
    <location>
        <begin position="197"/>
        <end position="207"/>
    </location>
</feature>
<feature type="helix" evidence="2">
    <location>
        <begin position="213"/>
        <end position="227"/>
    </location>
</feature>
<feature type="strand" evidence="2">
    <location>
        <begin position="232"/>
        <end position="239"/>
    </location>
</feature>
<gene>
    <name type="ordered locus">HP_0162</name>
</gene>
<sequence length="240" mass="27127">MGRAFEYRRAAKEKRWDKMSKVFPKLAKAITLAAKDGGSEPDTNAKLRTAILNAKAQNMPKDNIDAAIKRASSKEGNLSEITYEGKANFGVLIIMECMTDNPTRTIANLKSYFNKTQGASIVPNGSLEFMFNRKSVFECLKNEVENLKLSLEDLEFALIDYGLEELEEVEDKIIIRGDYNSFKLLNEGFESLKLPILKASLQRIATTPIELNDEQMELTEKLLDRIEDDDDVVALYTNIE</sequence>
<protein>
    <recommendedName>
        <fullName evidence="1">Probable transcriptional regulatory protein HP_0162</fullName>
    </recommendedName>
</protein>
<accession>O24970</accession>
<keyword id="KW-0002">3D-structure</keyword>
<keyword id="KW-0963">Cytoplasm</keyword>
<keyword id="KW-0238">DNA-binding</keyword>
<keyword id="KW-1185">Reference proteome</keyword>
<keyword id="KW-0804">Transcription</keyword>
<keyword id="KW-0805">Transcription regulation</keyword>
<comment type="subcellular location">
    <subcellularLocation>
        <location evidence="1">Cytoplasm</location>
    </subcellularLocation>
</comment>
<comment type="similarity">
    <text evidence="1">Belongs to the TACO1 family.</text>
</comment>
<reference key="1">
    <citation type="journal article" date="1997" name="Nature">
        <title>The complete genome sequence of the gastric pathogen Helicobacter pylori.</title>
        <authorList>
            <person name="Tomb J.-F."/>
            <person name="White O."/>
            <person name="Kerlavage A.R."/>
            <person name="Clayton R.A."/>
            <person name="Sutton G.G."/>
            <person name="Fleischmann R.D."/>
            <person name="Ketchum K.A."/>
            <person name="Klenk H.-P."/>
            <person name="Gill S.R."/>
            <person name="Dougherty B.A."/>
            <person name="Nelson K.E."/>
            <person name="Quackenbush J."/>
            <person name="Zhou L."/>
            <person name="Kirkness E.F."/>
            <person name="Peterson S.N."/>
            <person name="Loftus B.J."/>
            <person name="Richardson D.L."/>
            <person name="Dodson R.J."/>
            <person name="Khalak H.G."/>
            <person name="Glodek A."/>
            <person name="McKenney K."/>
            <person name="FitzGerald L.M."/>
            <person name="Lee N."/>
            <person name="Adams M.D."/>
            <person name="Hickey E.K."/>
            <person name="Berg D.E."/>
            <person name="Gocayne J.D."/>
            <person name="Utterback T.R."/>
            <person name="Peterson J.D."/>
            <person name="Kelley J.M."/>
            <person name="Cotton M.D."/>
            <person name="Weidman J.F."/>
            <person name="Fujii C."/>
            <person name="Bowman C."/>
            <person name="Watthey L."/>
            <person name="Wallin E."/>
            <person name="Hayes W.S."/>
            <person name="Borodovsky M."/>
            <person name="Karp P.D."/>
            <person name="Smith H.O."/>
            <person name="Fraser C.M."/>
            <person name="Venter J.C."/>
        </authorList>
    </citation>
    <scope>NUCLEOTIDE SEQUENCE [LARGE SCALE GENOMIC DNA]</scope>
    <source>
        <strain>ATCC 700392 / 26695</strain>
    </source>
</reference>
<reference key="2">
    <citation type="submission" date="2002-09" db="PDB data bank">
        <authorList>
            <person name="Kuzin A."/>
            <person name="Shen J."/>
            <person name="Keller J.P."/>
            <person name="Xiao R."/>
            <person name="Rost B."/>
            <person name="Montelione G."/>
            <person name="Hunt J.F."/>
        </authorList>
    </citation>
    <scope>X-RAY CRYSTALLOGRAPHY (2.0 ANGSTROMS)</scope>
</reference>
<name>Y162_HELPY</name>
<dbReference type="EMBL" id="AE000511">
    <property type="protein sequence ID" value="AAD07231.1"/>
    <property type="molecule type" value="Genomic_DNA"/>
</dbReference>
<dbReference type="PIR" id="B64540">
    <property type="entry name" value="B64540"/>
</dbReference>
<dbReference type="RefSeq" id="NP_206961.1">
    <property type="nucleotide sequence ID" value="NC_000915.1"/>
</dbReference>
<dbReference type="RefSeq" id="WP_000532084.1">
    <property type="nucleotide sequence ID" value="NC_018939.1"/>
</dbReference>
<dbReference type="PDB" id="1MW7">
    <property type="method" value="X-ray"/>
    <property type="resolution" value="2.00 A"/>
    <property type="chains" value="A=1-240"/>
</dbReference>
<dbReference type="PDBsum" id="1MW7"/>
<dbReference type="SMR" id="O24970"/>
<dbReference type="DIP" id="DIP-3628N"/>
<dbReference type="FunCoup" id="O24970">
    <property type="interactions" value="369"/>
</dbReference>
<dbReference type="IntAct" id="O24970">
    <property type="interactions" value="4"/>
</dbReference>
<dbReference type="MINT" id="O24970"/>
<dbReference type="STRING" id="85962.HP_0162"/>
<dbReference type="PaxDb" id="85962-C694_00805"/>
<dbReference type="EnsemblBacteria" id="AAD07231">
    <property type="protein sequence ID" value="AAD07231"/>
    <property type="gene ID" value="HP_0162"/>
</dbReference>
<dbReference type="KEGG" id="heo:C694_00805"/>
<dbReference type="KEGG" id="hpy:HP_0162"/>
<dbReference type="PATRIC" id="fig|85962.47.peg.175"/>
<dbReference type="eggNOG" id="COG0217">
    <property type="taxonomic scope" value="Bacteria"/>
</dbReference>
<dbReference type="InParanoid" id="O24970"/>
<dbReference type="OrthoDB" id="9781053at2"/>
<dbReference type="PhylomeDB" id="O24970"/>
<dbReference type="EvolutionaryTrace" id="O24970"/>
<dbReference type="Proteomes" id="UP000000429">
    <property type="component" value="Chromosome"/>
</dbReference>
<dbReference type="GO" id="GO:0005829">
    <property type="term" value="C:cytosol"/>
    <property type="evidence" value="ECO:0000318"/>
    <property type="project" value="GO_Central"/>
</dbReference>
<dbReference type="GO" id="GO:0003677">
    <property type="term" value="F:DNA binding"/>
    <property type="evidence" value="ECO:0007669"/>
    <property type="project" value="UniProtKB-UniRule"/>
</dbReference>
<dbReference type="GO" id="GO:0006355">
    <property type="term" value="P:regulation of DNA-templated transcription"/>
    <property type="evidence" value="ECO:0007669"/>
    <property type="project" value="UniProtKB-UniRule"/>
</dbReference>
<dbReference type="FunFam" id="1.10.10.200:FF:000008">
    <property type="entry name" value="Probable transcriptional regulatory protein HP_0162"/>
    <property type="match status" value="1"/>
</dbReference>
<dbReference type="FunFam" id="3.30.70.980:FF:000016">
    <property type="entry name" value="Probable transcriptional regulatory protein HP_0162"/>
    <property type="match status" value="1"/>
</dbReference>
<dbReference type="Gene3D" id="1.10.10.200">
    <property type="match status" value="1"/>
</dbReference>
<dbReference type="Gene3D" id="3.30.70.980">
    <property type="match status" value="2"/>
</dbReference>
<dbReference type="HAMAP" id="MF_00693">
    <property type="entry name" value="Transcrip_reg_TACO1"/>
    <property type="match status" value="1"/>
</dbReference>
<dbReference type="InterPro" id="IPR017856">
    <property type="entry name" value="Integrase-like_N"/>
</dbReference>
<dbReference type="InterPro" id="IPR048300">
    <property type="entry name" value="TACO1_YebC-like_2nd/3rd_dom"/>
</dbReference>
<dbReference type="InterPro" id="IPR049083">
    <property type="entry name" value="TACO1_YebC_N"/>
</dbReference>
<dbReference type="InterPro" id="IPR002876">
    <property type="entry name" value="Transcrip_reg_TACO1-like"/>
</dbReference>
<dbReference type="InterPro" id="IPR026564">
    <property type="entry name" value="Transcrip_reg_TACO1-like_dom3"/>
</dbReference>
<dbReference type="InterPro" id="IPR029072">
    <property type="entry name" value="YebC-like"/>
</dbReference>
<dbReference type="NCBIfam" id="NF009044">
    <property type="entry name" value="PRK12378.1"/>
    <property type="match status" value="1"/>
</dbReference>
<dbReference type="NCBIfam" id="TIGR01033">
    <property type="entry name" value="YebC/PmpR family DNA-binding transcriptional regulator"/>
    <property type="match status" value="1"/>
</dbReference>
<dbReference type="PANTHER" id="PTHR12532:SF6">
    <property type="entry name" value="TRANSCRIPTIONAL REGULATORY PROTEIN YEBC-RELATED"/>
    <property type="match status" value="1"/>
</dbReference>
<dbReference type="PANTHER" id="PTHR12532">
    <property type="entry name" value="TRANSLATIONAL ACTIVATOR OF CYTOCHROME C OXIDASE 1"/>
    <property type="match status" value="1"/>
</dbReference>
<dbReference type="Pfam" id="PF20772">
    <property type="entry name" value="TACO1_YebC_N"/>
    <property type="match status" value="1"/>
</dbReference>
<dbReference type="Pfam" id="PF01709">
    <property type="entry name" value="Transcrip_reg"/>
    <property type="match status" value="1"/>
</dbReference>
<dbReference type="SUPFAM" id="SSF75625">
    <property type="entry name" value="YebC-like"/>
    <property type="match status" value="1"/>
</dbReference>
<proteinExistence type="evidence at protein level"/>
<organism>
    <name type="scientific">Helicobacter pylori (strain ATCC 700392 / 26695)</name>
    <name type="common">Campylobacter pylori</name>
    <dbReference type="NCBI Taxonomy" id="85962"/>
    <lineage>
        <taxon>Bacteria</taxon>
        <taxon>Pseudomonadati</taxon>
        <taxon>Campylobacterota</taxon>
        <taxon>Epsilonproteobacteria</taxon>
        <taxon>Campylobacterales</taxon>
        <taxon>Helicobacteraceae</taxon>
        <taxon>Helicobacter</taxon>
    </lineage>
</organism>
<evidence type="ECO:0000255" key="1">
    <source>
        <dbReference type="HAMAP-Rule" id="MF_00693"/>
    </source>
</evidence>
<evidence type="ECO:0007829" key="2">
    <source>
        <dbReference type="PDB" id="1MW7"/>
    </source>
</evidence>